<accession>P80615</accession>
<dbReference type="MaizeGDB" id="123936"/>
<dbReference type="InParanoid" id="P80615"/>
<dbReference type="Proteomes" id="UP000007305">
    <property type="component" value="Unplaced"/>
</dbReference>
<name>UC09_MAIZE</name>
<comment type="miscellaneous">
    <text>On the 2D-gel the determined pI of this unknown protein is: 6.4, its MW is: 16.9 kDa.</text>
</comment>
<comment type="caution">
    <text evidence="1">The order of the peptides shown is unknown.</text>
</comment>
<feature type="chain" id="PRO_0000055507" description="Unknown protein from spot 206 of 2D-PAGE of etiolated coleoptile">
    <location>
        <begin position="1" status="less than"/>
        <end position="32" status="greater than"/>
    </location>
</feature>
<feature type="non-consecutive residues" evidence="1">
    <location>
        <begin position="17"/>
        <end position="18"/>
    </location>
</feature>
<feature type="non-consecutive residues" evidence="1">
    <location>
        <begin position="24"/>
        <end position="25"/>
    </location>
</feature>
<feature type="non-terminal residue">
    <location>
        <position position="1"/>
    </location>
</feature>
<feature type="non-terminal residue">
    <location>
        <position position="32"/>
    </location>
</feature>
<organism>
    <name type="scientific">Zea mays</name>
    <name type="common">Maize</name>
    <dbReference type="NCBI Taxonomy" id="4577"/>
    <lineage>
        <taxon>Eukaryota</taxon>
        <taxon>Viridiplantae</taxon>
        <taxon>Streptophyta</taxon>
        <taxon>Embryophyta</taxon>
        <taxon>Tracheophyta</taxon>
        <taxon>Spermatophyta</taxon>
        <taxon>Magnoliopsida</taxon>
        <taxon>Liliopsida</taxon>
        <taxon>Poales</taxon>
        <taxon>Poaceae</taxon>
        <taxon>PACMAD clade</taxon>
        <taxon>Panicoideae</taxon>
        <taxon>Andropogonodae</taxon>
        <taxon>Andropogoneae</taxon>
        <taxon>Tripsacinae</taxon>
        <taxon>Zea</taxon>
    </lineage>
</organism>
<protein>
    <recommendedName>
        <fullName>Unknown protein from spot 206 of 2D-PAGE of etiolated coleoptile</fullName>
    </recommendedName>
</protein>
<reference key="1">
    <citation type="journal article" date="1996" name="Theor. Appl. Genet.">
        <title>The maize two dimensional gel protein database: towards an integrated genome analysis program.</title>
        <authorList>
            <person name="Touzet P."/>
            <person name="Riccardi F."/>
            <person name="Morin C."/>
            <person name="Damerval C."/>
            <person name="Huet J.-C."/>
            <person name="Pernollet J.-C."/>
            <person name="Zivy M."/>
            <person name="de Vienne D."/>
        </authorList>
        <dbReference type="AGRICOLA" id="IND20551642"/>
    </citation>
    <scope>PROTEIN SEQUENCE</scope>
    <source>
        <tissue>Coleoptile</tissue>
    </source>
</reference>
<keyword id="KW-0903">Direct protein sequencing</keyword>
<keyword id="KW-1185">Reference proteome</keyword>
<proteinExistence type="evidence at protein level"/>
<evidence type="ECO:0000305" key="1"/>
<sequence length="32" mass="3251">ITEEVAAAAAVGAGGYVXXLGEAGHHHLFNHE</sequence>